<organism>
    <name type="scientific">Thermotoga petrophila (strain ATCC BAA-488 / DSM 13995 / JCM 10881 / RKU-1)</name>
    <dbReference type="NCBI Taxonomy" id="390874"/>
    <lineage>
        <taxon>Bacteria</taxon>
        <taxon>Thermotogati</taxon>
        <taxon>Thermotogota</taxon>
        <taxon>Thermotogae</taxon>
        <taxon>Thermotogales</taxon>
        <taxon>Thermotogaceae</taxon>
        <taxon>Thermotoga</taxon>
    </lineage>
</organism>
<keyword id="KW-0227">DNA damage</keyword>
<keyword id="KW-0234">DNA repair</keyword>
<keyword id="KW-0255">Endonuclease</keyword>
<keyword id="KW-0378">Hydrolase</keyword>
<keyword id="KW-0479">Metal-binding</keyword>
<keyword id="KW-0540">Nuclease</keyword>
<keyword id="KW-0862">Zinc</keyword>
<gene>
    <name evidence="1" type="primary">nfo</name>
    <name type="ordered locus">Tpet_0556</name>
</gene>
<protein>
    <recommendedName>
        <fullName evidence="1">Probable endonuclease 4</fullName>
        <ecNumber evidence="1">3.1.21.2</ecNumber>
    </recommendedName>
    <alternativeName>
        <fullName evidence="1">Endodeoxyribonuclease IV</fullName>
    </alternativeName>
    <alternativeName>
        <fullName evidence="1">Endonuclease IV</fullName>
    </alternativeName>
</protein>
<dbReference type="EC" id="3.1.21.2" evidence="1"/>
<dbReference type="EMBL" id="CP000702">
    <property type="protein sequence ID" value="ABQ46577.1"/>
    <property type="molecule type" value="Genomic_DNA"/>
</dbReference>
<dbReference type="RefSeq" id="WP_011943179.1">
    <property type="nucleotide sequence ID" value="NC_009486.1"/>
</dbReference>
<dbReference type="SMR" id="A5IK54"/>
<dbReference type="STRING" id="390874.Tpet_0556"/>
<dbReference type="KEGG" id="tpt:Tpet_0556"/>
<dbReference type="eggNOG" id="COG0648">
    <property type="taxonomic scope" value="Bacteria"/>
</dbReference>
<dbReference type="HOGENOM" id="CLU_025885_0_1_0"/>
<dbReference type="Proteomes" id="UP000006558">
    <property type="component" value="Chromosome"/>
</dbReference>
<dbReference type="GO" id="GO:0008833">
    <property type="term" value="F:deoxyribonuclease IV (phage-T4-induced) activity"/>
    <property type="evidence" value="ECO:0007669"/>
    <property type="project" value="UniProtKB-UniRule"/>
</dbReference>
<dbReference type="GO" id="GO:0003677">
    <property type="term" value="F:DNA binding"/>
    <property type="evidence" value="ECO:0007669"/>
    <property type="project" value="InterPro"/>
</dbReference>
<dbReference type="GO" id="GO:0003906">
    <property type="term" value="F:DNA-(apurinic or apyrimidinic site) endonuclease activity"/>
    <property type="evidence" value="ECO:0007669"/>
    <property type="project" value="TreeGrafter"/>
</dbReference>
<dbReference type="GO" id="GO:0008081">
    <property type="term" value="F:phosphoric diester hydrolase activity"/>
    <property type="evidence" value="ECO:0007669"/>
    <property type="project" value="TreeGrafter"/>
</dbReference>
<dbReference type="GO" id="GO:0008270">
    <property type="term" value="F:zinc ion binding"/>
    <property type="evidence" value="ECO:0007669"/>
    <property type="project" value="UniProtKB-UniRule"/>
</dbReference>
<dbReference type="GO" id="GO:0006284">
    <property type="term" value="P:base-excision repair"/>
    <property type="evidence" value="ECO:0007669"/>
    <property type="project" value="TreeGrafter"/>
</dbReference>
<dbReference type="CDD" id="cd00019">
    <property type="entry name" value="AP2Ec"/>
    <property type="match status" value="1"/>
</dbReference>
<dbReference type="FunFam" id="3.20.20.150:FF:000001">
    <property type="entry name" value="Probable endonuclease 4"/>
    <property type="match status" value="1"/>
</dbReference>
<dbReference type="Gene3D" id="3.20.20.150">
    <property type="entry name" value="Divalent-metal-dependent TIM barrel enzymes"/>
    <property type="match status" value="1"/>
</dbReference>
<dbReference type="HAMAP" id="MF_00152">
    <property type="entry name" value="Nfo"/>
    <property type="match status" value="1"/>
</dbReference>
<dbReference type="InterPro" id="IPR001719">
    <property type="entry name" value="AP_endonuc_2"/>
</dbReference>
<dbReference type="InterPro" id="IPR018246">
    <property type="entry name" value="AP_endonuc_F2_Zn_BS"/>
</dbReference>
<dbReference type="InterPro" id="IPR036237">
    <property type="entry name" value="Xyl_isomerase-like_sf"/>
</dbReference>
<dbReference type="InterPro" id="IPR013022">
    <property type="entry name" value="Xyl_isomerase-like_TIM-brl"/>
</dbReference>
<dbReference type="NCBIfam" id="TIGR00587">
    <property type="entry name" value="nfo"/>
    <property type="match status" value="1"/>
</dbReference>
<dbReference type="PANTHER" id="PTHR21445:SF0">
    <property type="entry name" value="APURINIC-APYRIMIDINIC ENDONUCLEASE"/>
    <property type="match status" value="1"/>
</dbReference>
<dbReference type="PANTHER" id="PTHR21445">
    <property type="entry name" value="ENDONUCLEASE IV ENDODEOXYRIBONUCLEASE IV"/>
    <property type="match status" value="1"/>
</dbReference>
<dbReference type="Pfam" id="PF01261">
    <property type="entry name" value="AP_endonuc_2"/>
    <property type="match status" value="1"/>
</dbReference>
<dbReference type="SMART" id="SM00518">
    <property type="entry name" value="AP2Ec"/>
    <property type="match status" value="1"/>
</dbReference>
<dbReference type="SUPFAM" id="SSF51658">
    <property type="entry name" value="Xylose isomerase-like"/>
    <property type="match status" value="1"/>
</dbReference>
<dbReference type="PROSITE" id="PS00729">
    <property type="entry name" value="AP_NUCLEASE_F2_1"/>
    <property type="match status" value="1"/>
</dbReference>
<dbReference type="PROSITE" id="PS00730">
    <property type="entry name" value="AP_NUCLEASE_F2_2"/>
    <property type="match status" value="1"/>
</dbReference>
<dbReference type="PROSITE" id="PS00731">
    <property type="entry name" value="AP_NUCLEASE_F2_3"/>
    <property type="match status" value="1"/>
</dbReference>
<dbReference type="PROSITE" id="PS51432">
    <property type="entry name" value="AP_NUCLEASE_F2_4"/>
    <property type="match status" value="1"/>
</dbReference>
<reference key="1">
    <citation type="submission" date="2007-05" db="EMBL/GenBank/DDBJ databases">
        <title>Complete sequence of Thermotoga petrophila RKU-1.</title>
        <authorList>
            <consortium name="US DOE Joint Genome Institute"/>
            <person name="Copeland A."/>
            <person name="Lucas S."/>
            <person name="Lapidus A."/>
            <person name="Barry K."/>
            <person name="Glavina del Rio T."/>
            <person name="Dalin E."/>
            <person name="Tice H."/>
            <person name="Pitluck S."/>
            <person name="Sims D."/>
            <person name="Brettin T."/>
            <person name="Bruce D."/>
            <person name="Detter J.C."/>
            <person name="Han C."/>
            <person name="Tapia R."/>
            <person name="Schmutz J."/>
            <person name="Larimer F."/>
            <person name="Land M."/>
            <person name="Hauser L."/>
            <person name="Kyrpides N."/>
            <person name="Mikhailova N."/>
            <person name="Nelson K."/>
            <person name="Gogarten J.P."/>
            <person name="Noll K."/>
            <person name="Richardson P."/>
        </authorList>
    </citation>
    <scope>NUCLEOTIDE SEQUENCE [LARGE SCALE GENOMIC DNA]</scope>
    <source>
        <strain>ATCC BAA-488 / DSM 13995 / JCM 10881 / RKU-1</strain>
    </source>
</reference>
<sequence length="287" mass="32564">MIKIGAHMPISKGFDRVPQDTVNIGGNAYQIFPHNARSWSAKLPSDDITTKFKREMKKYGIDWENAFCHSGYLINLASPKEDIWQKSVELLKKEVEICRKLGIRYLNIHPGSHLGAGEKEGTERIVRGLNEVLNSTEDVVILLENVSQKGGNIGYKLDQLKKIRDLVDQKDRVAITYDTCHGFDSGYDITKKEGVEALLNEIETLFGLERLKMIHLNDSKYPLGAAKDRHERIGSGFIGEEGFAVFFSFKEIQKVPWILETPGGNEEHAEDIKKVFEIIEKFDIEVD</sequence>
<evidence type="ECO:0000255" key="1">
    <source>
        <dbReference type="HAMAP-Rule" id="MF_00152"/>
    </source>
</evidence>
<proteinExistence type="inferred from homology"/>
<name>END4_THEP1</name>
<comment type="function">
    <text evidence="1">Endonuclease IV plays a role in DNA repair. It cleaves phosphodiester bonds at apurinic or apyrimidinic (AP) sites, generating a 3'-hydroxyl group and a 5'-terminal sugar phosphate.</text>
</comment>
<comment type="catalytic activity">
    <reaction evidence="1">
        <text>Endonucleolytic cleavage to 5'-phosphooligonucleotide end-products.</text>
        <dbReference type="EC" id="3.1.21.2"/>
    </reaction>
</comment>
<comment type="cofactor">
    <cofactor evidence="1">
        <name>Zn(2+)</name>
        <dbReference type="ChEBI" id="CHEBI:29105"/>
    </cofactor>
    <text evidence="1">Binds 3 Zn(2+) ions.</text>
</comment>
<comment type="similarity">
    <text evidence="1">Belongs to the AP endonuclease 2 family.</text>
</comment>
<accession>A5IK54</accession>
<feature type="chain" id="PRO_1000011344" description="Probable endonuclease 4">
    <location>
        <begin position="1"/>
        <end position="287"/>
    </location>
</feature>
<feature type="binding site" evidence="1">
    <location>
        <position position="69"/>
    </location>
    <ligand>
        <name>Zn(2+)</name>
        <dbReference type="ChEBI" id="CHEBI:29105"/>
        <label>1</label>
    </ligand>
</feature>
<feature type="binding site" evidence="1">
    <location>
        <position position="109"/>
    </location>
    <ligand>
        <name>Zn(2+)</name>
        <dbReference type="ChEBI" id="CHEBI:29105"/>
        <label>1</label>
    </ligand>
</feature>
<feature type="binding site" evidence="1">
    <location>
        <position position="144"/>
    </location>
    <ligand>
        <name>Zn(2+)</name>
        <dbReference type="ChEBI" id="CHEBI:29105"/>
        <label>1</label>
    </ligand>
</feature>
<feature type="binding site" evidence="1">
    <location>
        <position position="144"/>
    </location>
    <ligand>
        <name>Zn(2+)</name>
        <dbReference type="ChEBI" id="CHEBI:29105"/>
        <label>2</label>
    </ligand>
</feature>
<feature type="binding site" evidence="1">
    <location>
        <position position="178"/>
    </location>
    <ligand>
        <name>Zn(2+)</name>
        <dbReference type="ChEBI" id="CHEBI:29105"/>
        <label>2</label>
    </ligand>
</feature>
<feature type="binding site" evidence="1">
    <location>
        <position position="181"/>
    </location>
    <ligand>
        <name>Zn(2+)</name>
        <dbReference type="ChEBI" id="CHEBI:29105"/>
        <label>3</label>
    </ligand>
</feature>
<feature type="binding site" evidence="1">
    <location>
        <position position="215"/>
    </location>
    <ligand>
        <name>Zn(2+)</name>
        <dbReference type="ChEBI" id="CHEBI:29105"/>
        <label>2</label>
    </ligand>
</feature>
<feature type="binding site" evidence="1">
    <location>
        <position position="228"/>
    </location>
    <ligand>
        <name>Zn(2+)</name>
        <dbReference type="ChEBI" id="CHEBI:29105"/>
        <label>3</label>
    </ligand>
</feature>
<feature type="binding site" evidence="1">
    <location>
        <position position="230"/>
    </location>
    <ligand>
        <name>Zn(2+)</name>
        <dbReference type="ChEBI" id="CHEBI:29105"/>
        <label>3</label>
    </ligand>
</feature>
<feature type="binding site" evidence="1">
    <location>
        <position position="260"/>
    </location>
    <ligand>
        <name>Zn(2+)</name>
        <dbReference type="ChEBI" id="CHEBI:29105"/>
        <label>2</label>
    </ligand>
</feature>